<proteinExistence type="evidence at protein level"/>
<accession>P69029</accession>
<accession>P82401</accession>
<comment type="function">
    <text evidence="1">Has no antimicrobial or anticancer activity.</text>
</comment>
<comment type="subcellular location">
    <subcellularLocation>
        <location>Secreted</location>
    </subcellularLocation>
</comment>
<comment type="tissue specificity">
    <text>Expressed by the skin dorsal glands.</text>
</comment>
<comment type="similarity">
    <text evidence="2">Belongs to the frog skin active peptide (FSAP) family. Aurein subfamily.</text>
</comment>
<organism>
    <name type="scientific">Ranoidea aurea</name>
    <name type="common">Green and golden bell frog</name>
    <name type="synonym">Litoria aurea</name>
    <dbReference type="NCBI Taxonomy" id="8371"/>
    <lineage>
        <taxon>Eukaryota</taxon>
        <taxon>Metazoa</taxon>
        <taxon>Chordata</taxon>
        <taxon>Craniata</taxon>
        <taxon>Vertebrata</taxon>
        <taxon>Euteleostomi</taxon>
        <taxon>Amphibia</taxon>
        <taxon>Batrachia</taxon>
        <taxon>Anura</taxon>
        <taxon>Neobatrachia</taxon>
        <taxon>Hyloidea</taxon>
        <taxon>Hylidae</taxon>
        <taxon>Pelodryadinae</taxon>
        <taxon>Ranoidea</taxon>
    </lineage>
</organism>
<keyword id="KW-0878">Amphibian defense peptide</keyword>
<keyword id="KW-0903">Direct protein sequencing</keyword>
<keyword id="KW-0964">Secreted</keyword>
<name>AUR51_RANAE</name>
<protein>
    <recommendedName>
        <fullName>Aurein-5.1</fullName>
    </recommendedName>
</protein>
<sequence>GLLDIVTGLLGNLIVDVLKPKTPAS</sequence>
<reference key="1">
    <citation type="journal article" date="2000" name="Eur. J. Biochem.">
        <title>The antibiotic and anticancer active aurein peptides from the australian bell frogs Litoria aurea and Litoria raniformis the solution structure of aurein 1.2.</title>
        <authorList>
            <person name="Rozek T."/>
            <person name="Wegener K.L."/>
            <person name="Bowie J.H."/>
            <person name="Olver I.N."/>
            <person name="Carver J.A."/>
            <person name="Wallace J.C."/>
            <person name="Tyler M.J."/>
        </authorList>
    </citation>
    <scope>PROTEIN SEQUENCE</scope>
    <scope>FUNCTION</scope>
    <source>
        <tissue>Skin secretion</tissue>
    </source>
</reference>
<feature type="peptide" id="PRO_0000043733" description="Aurein-5.1">
    <location>
        <begin position="1"/>
        <end position="25"/>
    </location>
</feature>
<evidence type="ECO:0000269" key="1">
    <source>
    </source>
</evidence>
<evidence type="ECO:0000305" key="2"/>
<dbReference type="GO" id="GO:0005576">
    <property type="term" value="C:extracellular region"/>
    <property type="evidence" value="ECO:0007669"/>
    <property type="project" value="UniProtKB-SubCell"/>
</dbReference>
<dbReference type="GO" id="GO:0006952">
    <property type="term" value="P:defense response"/>
    <property type="evidence" value="ECO:0007669"/>
    <property type="project" value="UniProtKB-KW"/>
</dbReference>
<dbReference type="InterPro" id="IPR032021">
    <property type="entry name" value="Frog_Litoria"/>
</dbReference>
<dbReference type="Pfam" id="PF16049">
    <property type="entry name" value="Antimicrobial24"/>
    <property type="match status" value="1"/>
</dbReference>